<feature type="chain" id="PRO_0000124465" description="Small ribosomal subunit protein uS7c">
    <location>
        <begin position="1"/>
        <end position="155"/>
    </location>
</feature>
<proteinExistence type="inferred from homology"/>
<evidence type="ECO:0000250" key="1"/>
<evidence type="ECO:0000305" key="2"/>
<keyword id="KW-0150">Chloroplast</keyword>
<keyword id="KW-0934">Plastid</keyword>
<keyword id="KW-0687">Ribonucleoprotein</keyword>
<keyword id="KW-0689">Ribosomal protein</keyword>
<keyword id="KW-0694">RNA-binding</keyword>
<keyword id="KW-0699">rRNA-binding</keyword>
<geneLocation type="chloroplast"/>
<dbReference type="EMBL" id="AF123781">
    <property type="protein sequence ID" value="AAG26122.1"/>
    <property type="molecule type" value="Genomic_DNA"/>
</dbReference>
<dbReference type="RefSeq" id="YP_010447679.1">
    <property type="nucleotide sequence ID" value="NC_065383.1"/>
</dbReference>
<dbReference type="RefSeq" id="YP_010447692.1">
    <property type="nucleotide sequence ID" value="NC_065383.1"/>
</dbReference>
<dbReference type="SMR" id="Q9GFK8"/>
<dbReference type="GeneID" id="73954392"/>
<dbReference type="GeneID" id="73954425"/>
<dbReference type="GO" id="GO:0009507">
    <property type="term" value="C:chloroplast"/>
    <property type="evidence" value="ECO:0007669"/>
    <property type="project" value="UniProtKB-SubCell"/>
</dbReference>
<dbReference type="GO" id="GO:0015935">
    <property type="term" value="C:small ribosomal subunit"/>
    <property type="evidence" value="ECO:0007669"/>
    <property type="project" value="InterPro"/>
</dbReference>
<dbReference type="GO" id="GO:0019843">
    <property type="term" value="F:rRNA binding"/>
    <property type="evidence" value="ECO:0007669"/>
    <property type="project" value="UniProtKB-UniRule"/>
</dbReference>
<dbReference type="GO" id="GO:0003735">
    <property type="term" value="F:structural constituent of ribosome"/>
    <property type="evidence" value="ECO:0007669"/>
    <property type="project" value="InterPro"/>
</dbReference>
<dbReference type="GO" id="GO:0006412">
    <property type="term" value="P:translation"/>
    <property type="evidence" value="ECO:0007669"/>
    <property type="project" value="UniProtKB-UniRule"/>
</dbReference>
<dbReference type="CDD" id="cd14871">
    <property type="entry name" value="uS7_Chloroplast"/>
    <property type="match status" value="1"/>
</dbReference>
<dbReference type="FunFam" id="1.10.455.10:FF:000001">
    <property type="entry name" value="30S ribosomal protein S7"/>
    <property type="match status" value="1"/>
</dbReference>
<dbReference type="Gene3D" id="1.10.455.10">
    <property type="entry name" value="Ribosomal protein S7 domain"/>
    <property type="match status" value="1"/>
</dbReference>
<dbReference type="HAMAP" id="MF_00480_B">
    <property type="entry name" value="Ribosomal_uS7_B"/>
    <property type="match status" value="1"/>
</dbReference>
<dbReference type="InterPro" id="IPR000235">
    <property type="entry name" value="Ribosomal_uS7"/>
</dbReference>
<dbReference type="InterPro" id="IPR005717">
    <property type="entry name" value="Ribosomal_uS7_bac/org-type"/>
</dbReference>
<dbReference type="InterPro" id="IPR020606">
    <property type="entry name" value="Ribosomal_uS7_CS"/>
</dbReference>
<dbReference type="InterPro" id="IPR023798">
    <property type="entry name" value="Ribosomal_uS7_dom"/>
</dbReference>
<dbReference type="InterPro" id="IPR036823">
    <property type="entry name" value="Ribosomal_uS7_dom_sf"/>
</dbReference>
<dbReference type="NCBIfam" id="TIGR01029">
    <property type="entry name" value="rpsG_bact"/>
    <property type="match status" value="1"/>
</dbReference>
<dbReference type="PANTHER" id="PTHR11205">
    <property type="entry name" value="RIBOSOMAL PROTEIN S7"/>
    <property type="match status" value="1"/>
</dbReference>
<dbReference type="Pfam" id="PF00177">
    <property type="entry name" value="Ribosomal_S7"/>
    <property type="match status" value="1"/>
</dbReference>
<dbReference type="PIRSF" id="PIRSF002122">
    <property type="entry name" value="RPS7p_RPS7a_RPS5e_RPS7o"/>
    <property type="match status" value="1"/>
</dbReference>
<dbReference type="SUPFAM" id="SSF47973">
    <property type="entry name" value="Ribosomal protein S7"/>
    <property type="match status" value="1"/>
</dbReference>
<dbReference type="PROSITE" id="PS00052">
    <property type="entry name" value="RIBOSOMAL_S7"/>
    <property type="match status" value="1"/>
</dbReference>
<accession>Q9GFK8</accession>
<sequence length="155" mass="17355">MSRRGTAEEKTAKSDPIYRNRLVNMLVNRILKHGKKSLAYQILYRAVKKIQQKTETNPLSVLRQAIRGVTPDIVVKARRVGGSTHQVPIEIGSTQGKALAIRWLLVASRKRPGRNMAFKLSSELVDAAKGGGDAIRKKEETHKMAEANRAFAHFR</sequence>
<name>RR7_LACFR</name>
<gene>
    <name type="primary">rps7</name>
</gene>
<protein>
    <recommendedName>
        <fullName evidence="2">Small ribosomal subunit protein uS7c</fullName>
    </recommendedName>
    <alternativeName>
        <fullName>30S ribosomal protein S7, chloroplastic</fullName>
    </alternativeName>
</protein>
<reference key="1">
    <citation type="journal article" date="2000" name="Am. J. Bot.">
        <title>Utility of 17 chloroplast genes for inferring the phylogeny of the basal angiosperms.</title>
        <authorList>
            <person name="Graham S.W."/>
            <person name="Olmstead R.G."/>
        </authorList>
    </citation>
    <scope>NUCLEOTIDE SEQUENCE [GENOMIC DNA]</scope>
</reference>
<comment type="function">
    <text evidence="1">One of the primary rRNA binding proteins, it binds directly to 16S rRNA where it nucleates assembly of the head domain of the 30S subunit.</text>
</comment>
<comment type="subunit">
    <text>Part of the 30S ribosomal subunit.</text>
</comment>
<comment type="subcellular location">
    <subcellularLocation>
        <location>Plastid</location>
        <location>Chloroplast</location>
    </subcellularLocation>
</comment>
<comment type="similarity">
    <text evidence="2">Belongs to the universal ribosomal protein uS7 family.</text>
</comment>
<organism>
    <name type="scientific">Lactoris fernandeziana</name>
    <dbReference type="NCBI Taxonomy" id="22303"/>
    <lineage>
        <taxon>Eukaryota</taxon>
        <taxon>Viridiplantae</taxon>
        <taxon>Streptophyta</taxon>
        <taxon>Embryophyta</taxon>
        <taxon>Tracheophyta</taxon>
        <taxon>Spermatophyta</taxon>
        <taxon>Magnoliopsida</taxon>
        <taxon>Magnoliidae</taxon>
        <taxon>Piperales</taxon>
        <taxon>Lactoridaceae</taxon>
        <taxon>Lactoris</taxon>
    </lineage>
</organism>